<reference key="1">
    <citation type="journal article" date="2006" name="PLoS Biol.">
        <title>The genome of deep-sea vent chemolithoautotroph Thiomicrospira crunogena XCL-2.</title>
        <authorList>
            <person name="Scott K.M."/>
            <person name="Sievert S.M."/>
            <person name="Abril F.N."/>
            <person name="Ball L.A."/>
            <person name="Barrett C.J."/>
            <person name="Blake R.A."/>
            <person name="Boller A.J."/>
            <person name="Chain P.S.G."/>
            <person name="Clark J.A."/>
            <person name="Davis C.R."/>
            <person name="Detter C."/>
            <person name="Do K.F."/>
            <person name="Dobrinski K.P."/>
            <person name="Faza B.I."/>
            <person name="Fitzpatrick K.A."/>
            <person name="Freyermuth S.K."/>
            <person name="Harmer T.L."/>
            <person name="Hauser L.J."/>
            <person name="Huegler M."/>
            <person name="Kerfeld C.A."/>
            <person name="Klotz M.G."/>
            <person name="Kong W.W."/>
            <person name="Land M."/>
            <person name="Lapidus A."/>
            <person name="Larimer F.W."/>
            <person name="Longo D.L."/>
            <person name="Lucas S."/>
            <person name="Malfatti S.A."/>
            <person name="Massey S.E."/>
            <person name="Martin D.D."/>
            <person name="McCuddin Z."/>
            <person name="Meyer F."/>
            <person name="Moore J.L."/>
            <person name="Ocampo L.H. Jr."/>
            <person name="Paul J.H."/>
            <person name="Paulsen I.T."/>
            <person name="Reep D.K."/>
            <person name="Ren Q."/>
            <person name="Ross R.L."/>
            <person name="Sato P.Y."/>
            <person name="Thomas P."/>
            <person name="Tinkham L.E."/>
            <person name="Zeruth G.T."/>
        </authorList>
    </citation>
    <scope>NUCLEOTIDE SEQUENCE [LARGE SCALE GENOMIC DNA]</scope>
    <source>
        <strain>DSM 25203 / XCL-2</strain>
    </source>
</reference>
<feature type="chain" id="PRO_0000298055" description="S-ribosylhomocysteine lyase">
    <location>
        <begin position="1"/>
        <end position="173"/>
    </location>
</feature>
<feature type="binding site" evidence="1">
    <location>
        <position position="54"/>
    </location>
    <ligand>
        <name>Fe cation</name>
        <dbReference type="ChEBI" id="CHEBI:24875"/>
    </ligand>
</feature>
<feature type="binding site" evidence="1">
    <location>
        <position position="58"/>
    </location>
    <ligand>
        <name>Fe cation</name>
        <dbReference type="ChEBI" id="CHEBI:24875"/>
    </ligand>
</feature>
<feature type="binding site" evidence="1">
    <location>
        <position position="128"/>
    </location>
    <ligand>
        <name>Fe cation</name>
        <dbReference type="ChEBI" id="CHEBI:24875"/>
    </ligand>
</feature>
<sequence>MPLLDSFTVDHKIMNAPAVRVAKTMKTPGGDTITVFDLRFNKPNVDMMGEKGIHTLEHLFAGFIRAHLNADDVEIIDVSPMGCRTGFYMSLIGTPDEKRVADAWMKAMQDVLNVEKMEDIPELNEYQCGTYTMHSLEEAKSIAQNIIDHGIGVNKNENIALDKETLKALGNDV</sequence>
<name>LUXS_HYDCU</name>
<organism>
    <name type="scientific">Hydrogenovibrio crunogenus (strain DSM 25203 / XCL-2)</name>
    <name type="common">Thiomicrospira crunogena</name>
    <dbReference type="NCBI Taxonomy" id="317025"/>
    <lineage>
        <taxon>Bacteria</taxon>
        <taxon>Pseudomonadati</taxon>
        <taxon>Pseudomonadota</taxon>
        <taxon>Gammaproteobacteria</taxon>
        <taxon>Thiotrichales</taxon>
        <taxon>Piscirickettsiaceae</taxon>
        <taxon>Hydrogenovibrio</taxon>
    </lineage>
</organism>
<accession>Q31DQ6</accession>
<evidence type="ECO:0000255" key="1">
    <source>
        <dbReference type="HAMAP-Rule" id="MF_00091"/>
    </source>
</evidence>
<keyword id="KW-0071">Autoinducer synthesis</keyword>
<keyword id="KW-0408">Iron</keyword>
<keyword id="KW-0456">Lyase</keyword>
<keyword id="KW-0479">Metal-binding</keyword>
<keyword id="KW-0673">Quorum sensing</keyword>
<comment type="function">
    <text evidence="1">Involved in the synthesis of autoinducer 2 (AI-2) which is secreted by bacteria and is used to communicate both the cell density and the metabolic potential of the environment. The regulation of gene expression in response to changes in cell density is called quorum sensing. Catalyzes the transformation of S-ribosylhomocysteine (RHC) to homocysteine (HC) and 4,5-dihydroxy-2,3-pentadione (DPD).</text>
</comment>
<comment type="catalytic activity">
    <reaction evidence="1">
        <text>S-(5-deoxy-D-ribos-5-yl)-L-homocysteine = (S)-4,5-dihydroxypentane-2,3-dione + L-homocysteine</text>
        <dbReference type="Rhea" id="RHEA:17753"/>
        <dbReference type="ChEBI" id="CHEBI:29484"/>
        <dbReference type="ChEBI" id="CHEBI:58195"/>
        <dbReference type="ChEBI" id="CHEBI:58199"/>
        <dbReference type="EC" id="4.4.1.21"/>
    </reaction>
</comment>
<comment type="cofactor">
    <cofactor evidence="1">
        <name>Fe cation</name>
        <dbReference type="ChEBI" id="CHEBI:24875"/>
    </cofactor>
    <text evidence="1">Binds 1 Fe cation per subunit.</text>
</comment>
<comment type="subunit">
    <text evidence="1">Homodimer.</text>
</comment>
<comment type="similarity">
    <text evidence="1">Belongs to the LuxS family.</text>
</comment>
<proteinExistence type="inferred from homology"/>
<gene>
    <name evidence="1" type="primary">luxS</name>
    <name type="ordered locus">Tcr_2129</name>
</gene>
<dbReference type="EC" id="4.4.1.21" evidence="1"/>
<dbReference type="EMBL" id="CP000109">
    <property type="protein sequence ID" value="ABB42717.1"/>
    <property type="molecule type" value="Genomic_DNA"/>
</dbReference>
<dbReference type="SMR" id="Q31DQ6"/>
<dbReference type="STRING" id="317025.Tcr_2129"/>
<dbReference type="KEGG" id="tcx:Tcr_2129"/>
<dbReference type="eggNOG" id="COG1854">
    <property type="taxonomic scope" value="Bacteria"/>
</dbReference>
<dbReference type="HOGENOM" id="CLU_107531_2_0_6"/>
<dbReference type="OrthoDB" id="9788129at2"/>
<dbReference type="GO" id="GO:0005506">
    <property type="term" value="F:iron ion binding"/>
    <property type="evidence" value="ECO:0007669"/>
    <property type="project" value="InterPro"/>
</dbReference>
<dbReference type="GO" id="GO:0043768">
    <property type="term" value="F:S-ribosylhomocysteine lyase activity"/>
    <property type="evidence" value="ECO:0007669"/>
    <property type="project" value="UniProtKB-UniRule"/>
</dbReference>
<dbReference type="GO" id="GO:0009372">
    <property type="term" value="P:quorum sensing"/>
    <property type="evidence" value="ECO:0007669"/>
    <property type="project" value="UniProtKB-UniRule"/>
</dbReference>
<dbReference type="Gene3D" id="3.30.1360.80">
    <property type="entry name" value="S-ribosylhomocysteinase (LuxS)"/>
    <property type="match status" value="1"/>
</dbReference>
<dbReference type="HAMAP" id="MF_00091">
    <property type="entry name" value="LuxS"/>
    <property type="match status" value="1"/>
</dbReference>
<dbReference type="InterPro" id="IPR037005">
    <property type="entry name" value="LuxS_sf"/>
</dbReference>
<dbReference type="InterPro" id="IPR011249">
    <property type="entry name" value="Metalloenz_LuxS/M16"/>
</dbReference>
<dbReference type="InterPro" id="IPR003815">
    <property type="entry name" value="S-ribosylhomocysteinase"/>
</dbReference>
<dbReference type="NCBIfam" id="NF002602">
    <property type="entry name" value="PRK02260.1-2"/>
    <property type="match status" value="1"/>
</dbReference>
<dbReference type="PANTHER" id="PTHR35799">
    <property type="entry name" value="S-RIBOSYLHOMOCYSTEINE LYASE"/>
    <property type="match status" value="1"/>
</dbReference>
<dbReference type="PANTHER" id="PTHR35799:SF1">
    <property type="entry name" value="S-RIBOSYLHOMOCYSTEINE LYASE"/>
    <property type="match status" value="1"/>
</dbReference>
<dbReference type="Pfam" id="PF02664">
    <property type="entry name" value="LuxS"/>
    <property type="match status" value="1"/>
</dbReference>
<dbReference type="PIRSF" id="PIRSF006160">
    <property type="entry name" value="AI2"/>
    <property type="match status" value="1"/>
</dbReference>
<dbReference type="PRINTS" id="PR01487">
    <property type="entry name" value="LUXSPROTEIN"/>
</dbReference>
<dbReference type="SUPFAM" id="SSF63411">
    <property type="entry name" value="LuxS/MPP-like metallohydrolase"/>
    <property type="match status" value="1"/>
</dbReference>
<protein>
    <recommendedName>
        <fullName evidence="1">S-ribosylhomocysteine lyase</fullName>
        <ecNumber evidence="1">4.4.1.21</ecNumber>
    </recommendedName>
    <alternativeName>
        <fullName evidence="1">AI-2 synthesis protein</fullName>
    </alternativeName>
    <alternativeName>
        <fullName evidence="1">Autoinducer-2 production protein LuxS</fullName>
    </alternativeName>
</protein>